<accession>B1KHS7</accession>
<organism>
    <name type="scientific">Shewanella woodyi (strain ATCC 51908 / MS32)</name>
    <dbReference type="NCBI Taxonomy" id="392500"/>
    <lineage>
        <taxon>Bacteria</taxon>
        <taxon>Pseudomonadati</taxon>
        <taxon>Pseudomonadota</taxon>
        <taxon>Gammaproteobacteria</taxon>
        <taxon>Alteromonadales</taxon>
        <taxon>Shewanellaceae</taxon>
        <taxon>Shewanella</taxon>
    </lineage>
</organism>
<protein>
    <recommendedName>
        <fullName evidence="1">Peptidase T</fullName>
        <ecNumber evidence="1">3.4.11.4</ecNumber>
    </recommendedName>
    <alternativeName>
        <fullName evidence="1">Aminotripeptidase</fullName>
        <shortName evidence="1">Tripeptidase</shortName>
    </alternativeName>
    <alternativeName>
        <fullName evidence="1">Tripeptide aminopeptidase</fullName>
    </alternativeName>
</protein>
<name>PEPT_SHEWM</name>
<proteinExistence type="inferred from homology"/>
<evidence type="ECO:0000255" key="1">
    <source>
        <dbReference type="HAMAP-Rule" id="MF_00550"/>
    </source>
</evidence>
<keyword id="KW-0031">Aminopeptidase</keyword>
<keyword id="KW-0963">Cytoplasm</keyword>
<keyword id="KW-0378">Hydrolase</keyword>
<keyword id="KW-0479">Metal-binding</keyword>
<keyword id="KW-0482">Metalloprotease</keyword>
<keyword id="KW-0645">Protease</keyword>
<keyword id="KW-1185">Reference proteome</keyword>
<keyword id="KW-0862">Zinc</keyword>
<comment type="function">
    <text evidence="1">Cleaves the N-terminal amino acid of tripeptides.</text>
</comment>
<comment type="catalytic activity">
    <reaction evidence="1">
        <text>Release of the N-terminal residue from a tripeptide.</text>
        <dbReference type="EC" id="3.4.11.4"/>
    </reaction>
</comment>
<comment type="cofactor">
    <cofactor evidence="1">
        <name>Zn(2+)</name>
        <dbReference type="ChEBI" id="CHEBI:29105"/>
    </cofactor>
    <text evidence="1">Binds 2 Zn(2+) ions per subunit.</text>
</comment>
<comment type="subcellular location">
    <subcellularLocation>
        <location evidence="1">Cytoplasm</location>
    </subcellularLocation>
</comment>
<comment type="similarity">
    <text evidence="1">Belongs to the peptidase M20B family.</text>
</comment>
<dbReference type="EC" id="3.4.11.4" evidence="1"/>
<dbReference type="EMBL" id="CP000961">
    <property type="protein sequence ID" value="ACA88405.1"/>
    <property type="molecule type" value="Genomic_DNA"/>
</dbReference>
<dbReference type="RefSeq" id="WP_012326734.1">
    <property type="nucleotide sequence ID" value="NC_010506.1"/>
</dbReference>
<dbReference type="SMR" id="B1KHS7"/>
<dbReference type="STRING" id="392500.Swoo_4149"/>
<dbReference type="MEROPS" id="M20.003"/>
<dbReference type="KEGG" id="swd:Swoo_4149"/>
<dbReference type="eggNOG" id="COG2195">
    <property type="taxonomic scope" value="Bacteria"/>
</dbReference>
<dbReference type="HOGENOM" id="CLU_053676_0_0_6"/>
<dbReference type="Proteomes" id="UP000002168">
    <property type="component" value="Chromosome"/>
</dbReference>
<dbReference type="GO" id="GO:0005829">
    <property type="term" value="C:cytosol"/>
    <property type="evidence" value="ECO:0007669"/>
    <property type="project" value="TreeGrafter"/>
</dbReference>
<dbReference type="GO" id="GO:0008237">
    <property type="term" value="F:metallopeptidase activity"/>
    <property type="evidence" value="ECO:0007669"/>
    <property type="project" value="UniProtKB-KW"/>
</dbReference>
<dbReference type="GO" id="GO:0045148">
    <property type="term" value="F:tripeptide aminopeptidase activity"/>
    <property type="evidence" value="ECO:0007669"/>
    <property type="project" value="UniProtKB-UniRule"/>
</dbReference>
<dbReference type="GO" id="GO:0008270">
    <property type="term" value="F:zinc ion binding"/>
    <property type="evidence" value="ECO:0007669"/>
    <property type="project" value="UniProtKB-UniRule"/>
</dbReference>
<dbReference type="GO" id="GO:0043171">
    <property type="term" value="P:peptide catabolic process"/>
    <property type="evidence" value="ECO:0007669"/>
    <property type="project" value="UniProtKB-UniRule"/>
</dbReference>
<dbReference type="GO" id="GO:0006508">
    <property type="term" value="P:proteolysis"/>
    <property type="evidence" value="ECO:0007669"/>
    <property type="project" value="UniProtKB-UniRule"/>
</dbReference>
<dbReference type="CDD" id="cd03892">
    <property type="entry name" value="M20_peptT"/>
    <property type="match status" value="1"/>
</dbReference>
<dbReference type="Gene3D" id="3.30.70.360">
    <property type="match status" value="1"/>
</dbReference>
<dbReference type="Gene3D" id="3.40.630.10">
    <property type="entry name" value="Zn peptidases"/>
    <property type="match status" value="1"/>
</dbReference>
<dbReference type="HAMAP" id="MF_00550">
    <property type="entry name" value="Aminopeptidase_M20"/>
    <property type="match status" value="1"/>
</dbReference>
<dbReference type="InterPro" id="IPR001261">
    <property type="entry name" value="ArgE/DapE_CS"/>
</dbReference>
<dbReference type="InterPro" id="IPR036264">
    <property type="entry name" value="Bact_exopeptidase_dim_dom"/>
</dbReference>
<dbReference type="InterPro" id="IPR002933">
    <property type="entry name" value="Peptidase_M20"/>
</dbReference>
<dbReference type="InterPro" id="IPR011650">
    <property type="entry name" value="Peptidase_M20_dimer"/>
</dbReference>
<dbReference type="InterPro" id="IPR010161">
    <property type="entry name" value="Peptidase_M20B"/>
</dbReference>
<dbReference type="NCBIfam" id="TIGR01882">
    <property type="entry name" value="peptidase-T"/>
    <property type="match status" value="1"/>
</dbReference>
<dbReference type="NCBIfam" id="NF003976">
    <property type="entry name" value="PRK05469.1"/>
    <property type="match status" value="1"/>
</dbReference>
<dbReference type="NCBIfam" id="NF009920">
    <property type="entry name" value="PRK13381.1"/>
    <property type="match status" value="1"/>
</dbReference>
<dbReference type="PANTHER" id="PTHR42994">
    <property type="entry name" value="PEPTIDASE T"/>
    <property type="match status" value="1"/>
</dbReference>
<dbReference type="PANTHER" id="PTHR42994:SF1">
    <property type="entry name" value="PEPTIDASE T"/>
    <property type="match status" value="1"/>
</dbReference>
<dbReference type="Pfam" id="PF07687">
    <property type="entry name" value="M20_dimer"/>
    <property type="match status" value="1"/>
</dbReference>
<dbReference type="Pfam" id="PF01546">
    <property type="entry name" value="Peptidase_M20"/>
    <property type="match status" value="1"/>
</dbReference>
<dbReference type="PIRSF" id="PIRSF037215">
    <property type="entry name" value="Peptidase_M20B"/>
    <property type="match status" value="1"/>
</dbReference>
<dbReference type="SUPFAM" id="SSF55031">
    <property type="entry name" value="Bacterial exopeptidase dimerisation domain"/>
    <property type="match status" value="1"/>
</dbReference>
<dbReference type="SUPFAM" id="SSF53187">
    <property type="entry name" value="Zn-dependent exopeptidases"/>
    <property type="match status" value="1"/>
</dbReference>
<dbReference type="PROSITE" id="PS00758">
    <property type="entry name" value="ARGE_DAPE_CPG2_1"/>
    <property type="match status" value="1"/>
</dbReference>
<sequence length="410" mass="45216">MRQALLTRFLRYIKIDTQSKASNTRSPSSDSQLEFAVILKQELEQLGFERVELSHLGYLTASVPKTVDGVPCIGFIAHLDTAPDFCGANITPQIIENYDGEDILLGDSDLLSTEQFPSLLNYVGQTLITTDGTTLLGGDDKAGIAEIITALAHLIEHPEIPHGEIRLCFTPDEEIGRGAGHFDVPGFGAQWAYTIDGGELGELEYENFNAATAVIRAKGNNCHPGTAYGVMVNAQTMAARFHAKMPLQDTPEGSKDYDGFFHLVNMQGQTEEAELTYLIRDFDIDIFEQRKRWLTERVNSYNADLVVGSLEIEITDSYFNMKEQIIPHPHVVDIAKEAITSQGITPLVKPIRGGTDGARLSYMALPCPNIFTGGHNFHGKHEYICVESMEKAAGVILAICSLTCEKYLNR</sequence>
<reference key="1">
    <citation type="submission" date="2008-02" db="EMBL/GenBank/DDBJ databases">
        <title>Complete sequence of Shewanella woodyi ATCC 51908.</title>
        <authorList>
            <consortium name="US DOE Joint Genome Institute"/>
            <person name="Copeland A."/>
            <person name="Lucas S."/>
            <person name="Lapidus A."/>
            <person name="Glavina del Rio T."/>
            <person name="Dalin E."/>
            <person name="Tice H."/>
            <person name="Bruce D."/>
            <person name="Goodwin L."/>
            <person name="Pitluck S."/>
            <person name="Sims D."/>
            <person name="Brettin T."/>
            <person name="Detter J.C."/>
            <person name="Han C."/>
            <person name="Kuske C.R."/>
            <person name="Schmutz J."/>
            <person name="Larimer F."/>
            <person name="Land M."/>
            <person name="Hauser L."/>
            <person name="Kyrpides N."/>
            <person name="Lykidis A."/>
            <person name="Zhao J.-S."/>
            <person name="Richardson P."/>
        </authorList>
    </citation>
    <scope>NUCLEOTIDE SEQUENCE [LARGE SCALE GENOMIC DNA]</scope>
    <source>
        <strain>ATCC 51908 / MS32</strain>
    </source>
</reference>
<gene>
    <name evidence="1" type="primary">pepT</name>
    <name type="ordered locus">Swoo_4149</name>
</gene>
<feature type="chain" id="PRO_1000200896" description="Peptidase T">
    <location>
        <begin position="1"/>
        <end position="410"/>
    </location>
</feature>
<feature type="active site" evidence="1">
    <location>
        <position position="80"/>
    </location>
</feature>
<feature type="active site" description="Proton acceptor" evidence="1">
    <location>
        <position position="173"/>
    </location>
</feature>
<feature type="binding site" evidence="1">
    <location>
        <position position="78"/>
    </location>
    <ligand>
        <name>Zn(2+)</name>
        <dbReference type="ChEBI" id="CHEBI:29105"/>
        <label>1</label>
    </ligand>
</feature>
<feature type="binding site" evidence="1">
    <location>
        <position position="139"/>
    </location>
    <ligand>
        <name>Zn(2+)</name>
        <dbReference type="ChEBI" id="CHEBI:29105"/>
        <label>1</label>
    </ligand>
</feature>
<feature type="binding site" evidence="1">
    <location>
        <position position="139"/>
    </location>
    <ligand>
        <name>Zn(2+)</name>
        <dbReference type="ChEBI" id="CHEBI:29105"/>
        <label>2</label>
    </ligand>
</feature>
<feature type="binding site" evidence="1">
    <location>
        <position position="174"/>
    </location>
    <ligand>
        <name>Zn(2+)</name>
        <dbReference type="ChEBI" id="CHEBI:29105"/>
        <label>2</label>
    </ligand>
</feature>
<feature type="binding site" evidence="1">
    <location>
        <position position="196"/>
    </location>
    <ligand>
        <name>Zn(2+)</name>
        <dbReference type="ChEBI" id="CHEBI:29105"/>
        <label>1</label>
    </ligand>
</feature>
<feature type="binding site" evidence="1">
    <location>
        <position position="378"/>
    </location>
    <ligand>
        <name>Zn(2+)</name>
        <dbReference type="ChEBI" id="CHEBI:29105"/>
        <label>2</label>
    </ligand>
</feature>